<accession>Q6K2M1</accession>
<accession>A0A0P0XLP5</accession>
<sequence length="690" mass="71493">MAPPRHARLVAATIAVLLCHLPRSAASPSWSDAAVSPPSPSPQLCPMMQQRSVLPPRVSELPASPFTAKAAFVRYWNRKVHSNRPHPAFFFAKLSPLSAPDAAAFSTLAAAGQLGSRIRAFCAAASLLCPTTPGSSWSKSSSDGDGAAAAAAPAGGGGGGGGGGDGGAAPFKNYENGNFSSYGNSGGGGADQFAVYSSGQSNGGGGGGGGVDSFRRYGKGSQGRNDSFTSYEAGGNVGTSSFTSYNGDATGGAGGFSSYAGDANTVAVSFGNYDHTGNGRSREFSEYTQDANTGEESFAAYGKTANGAAESFRTYGNHSNSIATGFDNYGDRANGAADAFSSYGASGNTPENTFKSYASGSNAGVDDFKGYRDDANVGNDSFTSYASNANGAAAGFESYGKSVNPGSVTFKGYGLGSNPNHRIGFARYSGDNTTFKAYSNDGVEFKEYQNMSKMEVSKIEAAARRPPLRWSPEPGKFFRERDLVAGNRMPMPDIADRTPPRAFLPRDIAAKIPFDAAAVSALFGAAPGTAMRQVVSSTVAECARPPSRGETKRCATSAEDVVDFAVEMLGDNVVARATESTAGGGGDVRLGRVAGVPAGGNVTRSVSCHQSLFPYLVYYCHSVPTVRVYEADILAVDSNQKINHGVAICHLDTSDWSPNHGAFIALGGKPGEMEVCHWIFQGDMTWTVAN</sequence>
<reference key="1">
    <citation type="journal article" date="2005" name="Nature">
        <title>The map-based sequence of the rice genome.</title>
        <authorList>
            <consortium name="International rice genome sequencing project (IRGSP)"/>
        </authorList>
    </citation>
    <scope>NUCLEOTIDE SEQUENCE [LARGE SCALE GENOMIC DNA]</scope>
    <source>
        <strain>cv. Nipponbare</strain>
    </source>
</reference>
<reference key="2">
    <citation type="journal article" date="2008" name="Nucleic Acids Res.">
        <title>The rice annotation project database (RAP-DB): 2008 update.</title>
        <authorList>
            <consortium name="The rice annotation project (RAP)"/>
        </authorList>
    </citation>
    <scope>GENOME REANNOTATION</scope>
    <source>
        <strain>cv. Nipponbare</strain>
    </source>
</reference>
<reference key="3">
    <citation type="journal article" date="2013" name="Rice">
        <title>Improvement of the Oryza sativa Nipponbare reference genome using next generation sequence and optical map data.</title>
        <authorList>
            <person name="Kawahara Y."/>
            <person name="de la Bastide M."/>
            <person name="Hamilton J.P."/>
            <person name="Kanamori H."/>
            <person name="McCombie W.R."/>
            <person name="Ouyang S."/>
            <person name="Schwartz D.C."/>
            <person name="Tanaka T."/>
            <person name="Wu J."/>
            <person name="Zhou S."/>
            <person name="Childs K.L."/>
            <person name="Davidson R.M."/>
            <person name="Lin H."/>
            <person name="Quesada-Ocampo L."/>
            <person name="Vaillancourt B."/>
            <person name="Sakai H."/>
            <person name="Lee S.S."/>
            <person name="Kim J."/>
            <person name="Numa H."/>
            <person name="Itoh T."/>
            <person name="Buell C.R."/>
            <person name="Matsumoto T."/>
        </authorList>
    </citation>
    <scope>GENOME REANNOTATION</scope>
    <source>
        <strain>cv. Nipponbare</strain>
    </source>
</reference>
<reference key="4">
    <citation type="journal article" date="2009" name="Planta">
        <title>Genome-wide identification of BURP domain-containing genes in rice reveals a gene family with diverse structures and responses to abiotic stresses.</title>
        <authorList>
            <person name="Ding X."/>
            <person name="Hou X."/>
            <person name="Xie K."/>
            <person name="Xiong L."/>
        </authorList>
    </citation>
    <scope>TISSUE SPECIFICITY</scope>
    <scope>GENE NOMENCLATURE</scope>
</reference>
<name>BURPE_ORYSJ</name>
<evidence type="ECO:0000255" key="1"/>
<evidence type="ECO:0000255" key="2">
    <source>
        <dbReference type="PROSITE-ProRule" id="PRU00604"/>
    </source>
</evidence>
<evidence type="ECO:0000256" key="3">
    <source>
        <dbReference type="SAM" id="MobiDB-lite"/>
    </source>
</evidence>
<evidence type="ECO:0000269" key="4">
    <source>
    </source>
</evidence>
<evidence type="ECO:0000305" key="5"/>
<proteinExistence type="evidence at transcript level"/>
<organism>
    <name type="scientific">Oryza sativa subsp. japonica</name>
    <name type="common">Rice</name>
    <dbReference type="NCBI Taxonomy" id="39947"/>
    <lineage>
        <taxon>Eukaryota</taxon>
        <taxon>Viridiplantae</taxon>
        <taxon>Streptophyta</taxon>
        <taxon>Embryophyta</taxon>
        <taxon>Tracheophyta</taxon>
        <taxon>Spermatophyta</taxon>
        <taxon>Magnoliopsida</taxon>
        <taxon>Liliopsida</taxon>
        <taxon>Poales</taxon>
        <taxon>Poaceae</taxon>
        <taxon>BOP clade</taxon>
        <taxon>Oryzoideae</taxon>
        <taxon>Oryzeae</taxon>
        <taxon>Oryzinae</taxon>
        <taxon>Oryza</taxon>
        <taxon>Oryza sativa</taxon>
    </lineage>
</organism>
<feature type="signal peptide" evidence="1">
    <location>
        <begin position="1"/>
        <end position="26"/>
    </location>
</feature>
<feature type="chain" id="PRO_0000375841" description="BURP domain-containing protein 14">
    <location>
        <begin position="27"/>
        <end position="690"/>
    </location>
</feature>
<feature type="domain" description="BURP" evidence="2">
    <location>
        <begin position="477"/>
        <end position="689"/>
    </location>
</feature>
<feature type="region of interest" description="Disordered" evidence="3">
    <location>
        <begin position="134"/>
        <end position="163"/>
    </location>
</feature>
<feature type="region of interest" description="Disordered" evidence="3">
    <location>
        <begin position="201"/>
        <end position="232"/>
    </location>
</feature>
<feature type="compositionally biased region" description="Low complexity" evidence="3">
    <location>
        <begin position="135"/>
        <end position="153"/>
    </location>
</feature>
<feature type="compositionally biased region" description="Gly residues" evidence="3">
    <location>
        <begin position="154"/>
        <end position="163"/>
    </location>
</feature>
<feature type="compositionally biased region" description="Gly residues" evidence="3">
    <location>
        <begin position="201"/>
        <end position="211"/>
    </location>
</feature>
<feature type="glycosylation site" description="N-linked (GlcNAc...) asparagine" evidence="1">
    <location>
        <position position="178"/>
    </location>
</feature>
<feature type="glycosylation site" description="N-linked (GlcNAc...) asparagine" evidence="1">
    <location>
        <position position="225"/>
    </location>
</feature>
<feature type="glycosylation site" description="N-linked (GlcNAc...) asparagine" evidence="1">
    <location>
        <position position="317"/>
    </location>
</feature>
<feature type="glycosylation site" description="N-linked (GlcNAc...) asparagine" evidence="1">
    <location>
        <position position="379"/>
    </location>
</feature>
<feature type="glycosylation site" description="N-linked (GlcNAc...) asparagine" evidence="1">
    <location>
        <position position="432"/>
    </location>
</feature>
<feature type="glycosylation site" description="N-linked (GlcNAc...) asparagine" evidence="1">
    <location>
        <position position="450"/>
    </location>
</feature>
<feature type="glycosylation site" description="N-linked (GlcNAc...) asparagine" evidence="1">
    <location>
        <position position="601"/>
    </location>
</feature>
<gene>
    <name type="primary">BURP14</name>
    <name type="ordered locus">Os09g0329000</name>
    <name type="ordered locus">LOC_Os09g16010</name>
    <name type="ORF">OSJNBa0040N23.1</name>
    <name type="ORF">P0706E03.43</name>
</gene>
<dbReference type="EMBL" id="AP005811">
    <property type="protein sequence ID" value="BAD23622.1"/>
    <property type="status" value="ALT_SEQ"/>
    <property type="molecule type" value="Genomic_DNA"/>
</dbReference>
<dbReference type="EMBL" id="AP005863">
    <property type="protein sequence ID" value="BAD29397.1"/>
    <property type="status" value="ALT_SEQ"/>
    <property type="molecule type" value="Genomic_DNA"/>
</dbReference>
<dbReference type="EMBL" id="AP008215">
    <property type="protein sequence ID" value="BAF24810.2"/>
    <property type="molecule type" value="Genomic_DNA"/>
</dbReference>
<dbReference type="EMBL" id="AP014965">
    <property type="protein sequence ID" value="BAT07508.1"/>
    <property type="molecule type" value="Genomic_DNA"/>
</dbReference>
<dbReference type="RefSeq" id="XP_015611130.1">
    <property type="nucleotide sequence ID" value="XM_015755644.1"/>
</dbReference>
<dbReference type="FunCoup" id="Q6K2M1">
    <property type="interactions" value="52"/>
</dbReference>
<dbReference type="STRING" id="39947.Q6K2M1"/>
<dbReference type="GlyCosmos" id="Q6K2M1">
    <property type="glycosylation" value="7 sites, No reported glycans"/>
</dbReference>
<dbReference type="PaxDb" id="39947-Q6K2M1"/>
<dbReference type="EnsemblPlants" id="Os09t0329000-00">
    <property type="protein sequence ID" value="Os09t0329000-00"/>
    <property type="gene ID" value="Os09g0329000"/>
</dbReference>
<dbReference type="Gramene" id="Os09t0329000-00">
    <property type="protein sequence ID" value="Os09t0329000-00"/>
    <property type="gene ID" value="Os09g0329000"/>
</dbReference>
<dbReference type="KEGG" id="dosa:Os09g0329000"/>
<dbReference type="eggNOG" id="ENOG502QT2V">
    <property type="taxonomic scope" value="Eukaryota"/>
</dbReference>
<dbReference type="HOGENOM" id="CLU_011822_5_0_1"/>
<dbReference type="InParanoid" id="Q6K2M1"/>
<dbReference type="OMA" id="FKRYGKG"/>
<dbReference type="OrthoDB" id="773062at2759"/>
<dbReference type="Proteomes" id="UP000000763">
    <property type="component" value="Chromosome 9"/>
</dbReference>
<dbReference type="Proteomes" id="UP000059680">
    <property type="component" value="Chromosome 9"/>
</dbReference>
<dbReference type="InterPro" id="IPR004873">
    <property type="entry name" value="BURP_dom"/>
</dbReference>
<dbReference type="InterPro" id="IPR051897">
    <property type="entry name" value="PG-associated_BURP"/>
</dbReference>
<dbReference type="PANTHER" id="PTHR31458:SF4">
    <property type="entry name" value="BURP DOMAIN-CONTAINING PROTEIN 14"/>
    <property type="match status" value="1"/>
</dbReference>
<dbReference type="PANTHER" id="PTHR31458">
    <property type="entry name" value="POLYGALACTURONASE 1 BETA-LIKE PROTEIN 2"/>
    <property type="match status" value="1"/>
</dbReference>
<dbReference type="Pfam" id="PF03181">
    <property type="entry name" value="BURP"/>
    <property type="match status" value="1"/>
</dbReference>
<dbReference type="SMART" id="SM01045">
    <property type="entry name" value="BURP"/>
    <property type="match status" value="1"/>
</dbReference>
<dbReference type="PROSITE" id="PS51277">
    <property type="entry name" value="BURP"/>
    <property type="match status" value="1"/>
</dbReference>
<keyword id="KW-0325">Glycoprotein</keyword>
<keyword id="KW-1185">Reference proteome</keyword>
<keyword id="KW-0732">Signal</keyword>
<comment type="tissue specificity">
    <text evidence="4">Expressed in panicles.</text>
</comment>
<comment type="sequence caution" evidence="5">
    <conflict type="erroneous gene model prediction">
        <sequence resource="EMBL-CDS" id="BAD23622"/>
    </conflict>
</comment>
<comment type="sequence caution" evidence="5">
    <conflict type="erroneous gene model prediction">
        <sequence resource="EMBL-CDS" id="BAD29397"/>
    </conflict>
</comment>
<protein>
    <recommendedName>
        <fullName>BURP domain-containing protein 14</fullName>
        <shortName>OsBURP14</shortName>
    </recommendedName>
</protein>